<reference key="1">
    <citation type="journal article" date="2008" name="PLoS ONE">
        <title>Comparative analysis of Acinetobacters: three genomes for three lifestyles.</title>
        <authorList>
            <person name="Vallenet D."/>
            <person name="Nordmann P."/>
            <person name="Barbe V."/>
            <person name="Poirel L."/>
            <person name="Mangenot S."/>
            <person name="Bataille E."/>
            <person name="Dossat C."/>
            <person name="Gas S."/>
            <person name="Kreimeyer A."/>
            <person name="Lenoble P."/>
            <person name="Oztas S."/>
            <person name="Poulain J."/>
            <person name="Segurens B."/>
            <person name="Robert C."/>
            <person name="Abergel C."/>
            <person name="Claverie J.-M."/>
            <person name="Raoult D."/>
            <person name="Medigue C."/>
            <person name="Weissenbach J."/>
            <person name="Cruveiller S."/>
        </authorList>
    </citation>
    <scope>NUCLEOTIDE SEQUENCE [LARGE SCALE GENOMIC DNA]</scope>
    <source>
        <strain>SDF</strain>
    </source>
</reference>
<accession>B0VL27</accession>
<sequence length="84" mass="9846">MLILTRRVGETLMIGDQVSVTVLGVKGNQVRIGVNAPKEVSVHREEIYQRIQHERAMHEHLQHLDQDYQVSYEDDNYAQKNFNR</sequence>
<evidence type="ECO:0000255" key="1">
    <source>
        <dbReference type="HAMAP-Rule" id="MF_00167"/>
    </source>
</evidence>
<keyword id="KW-0010">Activator</keyword>
<keyword id="KW-0963">Cytoplasm</keyword>
<keyword id="KW-0678">Repressor</keyword>
<keyword id="KW-0694">RNA-binding</keyword>
<keyword id="KW-0810">Translation regulation</keyword>
<organism>
    <name type="scientific">Acinetobacter baumannii (strain SDF)</name>
    <dbReference type="NCBI Taxonomy" id="509170"/>
    <lineage>
        <taxon>Bacteria</taxon>
        <taxon>Pseudomonadati</taxon>
        <taxon>Pseudomonadota</taxon>
        <taxon>Gammaproteobacteria</taxon>
        <taxon>Moraxellales</taxon>
        <taxon>Moraxellaceae</taxon>
        <taxon>Acinetobacter</taxon>
        <taxon>Acinetobacter calcoaceticus/baumannii complex</taxon>
    </lineage>
</organism>
<gene>
    <name evidence="1" type="primary">csrA</name>
    <name type="ordered locus">ABSDF1431</name>
</gene>
<comment type="function">
    <text evidence="1">A key translational regulator that binds mRNA to regulate translation initiation and/or mRNA stability. Mediates global changes in gene expression, shifting from rapid growth to stress survival by linking envelope stress, the stringent response and the catabolite repression systems. Usually binds in the 5'-UTR; binding at or near the Shine-Dalgarno sequence prevents ribosome-binding, repressing translation, binding elsewhere in the 5'-UTR can activate translation and/or stabilize the mRNA. Its function is antagonized by small RNA(s).</text>
</comment>
<comment type="subunit">
    <text evidence="1">Homodimer; the beta-strands of each monomer intercalate to form a hydrophobic core, while the alpha-helices form wings that extend away from the core.</text>
</comment>
<comment type="subcellular location">
    <subcellularLocation>
        <location evidence="1">Cytoplasm</location>
    </subcellularLocation>
</comment>
<comment type="similarity">
    <text evidence="1">Belongs to the CsrA/RsmA family.</text>
</comment>
<protein>
    <recommendedName>
        <fullName evidence="1">Translational regulator CsrA</fullName>
    </recommendedName>
    <alternativeName>
        <fullName evidence="1">Carbon storage regulator</fullName>
    </alternativeName>
</protein>
<name>CSRA_ACIBS</name>
<feature type="chain" id="PRO_1000097472" description="Translational regulator CsrA">
    <location>
        <begin position="1"/>
        <end position="84"/>
    </location>
</feature>
<dbReference type="EMBL" id="CU468230">
    <property type="protein sequence ID" value="CAP00777.1"/>
    <property type="molecule type" value="Genomic_DNA"/>
</dbReference>
<dbReference type="SMR" id="B0VL27"/>
<dbReference type="KEGG" id="abm:ABSDF1431"/>
<dbReference type="HOGENOM" id="CLU_164837_2_1_6"/>
<dbReference type="Proteomes" id="UP000001741">
    <property type="component" value="Chromosome"/>
</dbReference>
<dbReference type="GO" id="GO:0005829">
    <property type="term" value="C:cytosol"/>
    <property type="evidence" value="ECO:0007669"/>
    <property type="project" value="TreeGrafter"/>
</dbReference>
<dbReference type="GO" id="GO:0048027">
    <property type="term" value="F:mRNA 5'-UTR binding"/>
    <property type="evidence" value="ECO:0007669"/>
    <property type="project" value="UniProtKB-UniRule"/>
</dbReference>
<dbReference type="GO" id="GO:0006402">
    <property type="term" value="P:mRNA catabolic process"/>
    <property type="evidence" value="ECO:0007669"/>
    <property type="project" value="InterPro"/>
</dbReference>
<dbReference type="GO" id="GO:0045947">
    <property type="term" value="P:negative regulation of translational initiation"/>
    <property type="evidence" value="ECO:0007669"/>
    <property type="project" value="UniProtKB-UniRule"/>
</dbReference>
<dbReference type="GO" id="GO:0045948">
    <property type="term" value="P:positive regulation of translational initiation"/>
    <property type="evidence" value="ECO:0007669"/>
    <property type="project" value="UniProtKB-UniRule"/>
</dbReference>
<dbReference type="GO" id="GO:0006109">
    <property type="term" value="P:regulation of carbohydrate metabolic process"/>
    <property type="evidence" value="ECO:0007669"/>
    <property type="project" value="UniProtKB-UniRule"/>
</dbReference>
<dbReference type="FunFam" id="2.60.40.4380:FF:000001">
    <property type="entry name" value="Translational regulator CsrA"/>
    <property type="match status" value="1"/>
</dbReference>
<dbReference type="Gene3D" id="2.60.40.4380">
    <property type="entry name" value="Translational regulator CsrA"/>
    <property type="match status" value="1"/>
</dbReference>
<dbReference type="HAMAP" id="MF_00167">
    <property type="entry name" value="CsrA"/>
    <property type="match status" value="1"/>
</dbReference>
<dbReference type="InterPro" id="IPR003751">
    <property type="entry name" value="CsrA"/>
</dbReference>
<dbReference type="InterPro" id="IPR036107">
    <property type="entry name" value="CsrA_sf"/>
</dbReference>
<dbReference type="NCBIfam" id="TIGR00202">
    <property type="entry name" value="csrA"/>
    <property type="match status" value="1"/>
</dbReference>
<dbReference type="NCBIfam" id="NF002469">
    <property type="entry name" value="PRK01712.1"/>
    <property type="match status" value="1"/>
</dbReference>
<dbReference type="PANTHER" id="PTHR34984">
    <property type="entry name" value="CARBON STORAGE REGULATOR"/>
    <property type="match status" value="1"/>
</dbReference>
<dbReference type="PANTHER" id="PTHR34984:SF1">
    <property type="entry name" value="CARBON STORAGE REGULATOR"/>
    <property type="match status" value="1"/>
</dbReference>
<dbReference type="Pfam" id="PF02599">
    <property type="entry name" value="CsrA"/>
    <property type="match status" value="1"/>
</dbReference>
<dbReference type="SUPFAM" id="SSF117130">
    <property type="entry name" value="CsrA-like"/>
    <property type="match status" value="1"/>
</dbReference>
<proteinExistence type="inferred from homology"/>